<comment type="function">
    <text evidence="1">Catalyzes the reversible reaction in which hydroxymethyl group from 5,10-methylenetetrahydrofolate is transferred onto alpha-ketoisovalerate to form ketopantoate.</text>
</comment>
<comment type="catalytic activity">
    <reaction evidence="1">
        <text>3-methyl-2-oxobutanoate + (6R)-5,10-methylene-5,6,7,8-tetrahydrofolate + H2O = 2-dehydropantoate + (6S)-5,6,7,8-tetrahydrofolate</text>
        <dbReference type="Rhea" id="RHEA:11824"/>
        <dbReference type="ChEBI" id="CHEBI:11561"/>
        <dbReference type="ChEBI" id="CHEBI:11851"/>
        <dbReference type="ChEBI" id="CHEBI:15377"/>
        <dbReference type="ChEBI" id="CHEBI:15636"/>
        <dbReference type="ChEBI" id="CHEBI:57453"/>
        <dbReference type="EC" id="2.1.2.11"/>
    </reaction>
</comment>
<comment type="cofactor">
    <cofactor evidence="1">
        <name>Mg(2+)</name>
        <dbReference type="ChEBI" id="CHEBI:18420"/>
    </cofactor>
    <text evidence="1">Binds 1 Mg(2+) ion per subunit.</text>
</comment>
<comment type="pathway">
    <text evidence="1">Cofactor biosynthesis; (R)-pantothenate biosynthesis; (R)-pantoate from 3-methyl-2-oxobutanoate: step 1/2.</text>
</comment>
<comment type="subunit">
    <text evidence="1">Homodecamer; pentamer of dimers.</text>
</comment>
<comment type="subcellular location">
    <subcellularLocation>
        <location evidence="1">Cytoplasm</location>
    </subcellularLocation>
</comment>
<comment type="similarity">
    <text evidence="1">Belongs to the PanB family.</text>
</comment>
<organism>
    <name type="scientific">Prosthecochloris aestuarii (strain DSM 271 / SK 413)</name>
    <dbReference type="NCBI Taxonomy" id="290512"/>
    <lineage>
        <taxon>Bacteria</taxon>
        <taxon>Pseudomonadati</taxon>
        <taxon>Chlorobiota</taxon>
        <taxon>Chlorobiia</taxon>
        <taxon>Chlorobiales</taxon>
        <taxon>Chlorobiaceae</taxon>
        <taxon>Prosthecochloris</taxon>
    </lineage>
</organism>
<feature type="chain" id="PRO_1000096992" description="3-methyl-2-oxobutanoate hydroxymethyltransferase">
    <location>
        <begin position="1"/>
        <end position="277"/>
    </location>
</feature>
<feature type="active site" description="Proton acceptor" evidence="1">
    <location>
        <position position="195"/>
    </location>
</feature>
<feature type="binding site" evidence="1">
    <location>
        <begin position="53"/>
        <end position="54"/>
    </location>
    <ligand>
        <name>3-methyl-2-oxobutanoate</name>
        <dbReference type="ChEBI" id="CHEBI:11851"/>
    </ligand>
</feature>
<feature type="binding site" evidence="1">
    <location>
        <position position="53"/>
    </location>
    <ligand>
        <name>Mg(2+)</name>
        <dbReference type="ChEBI" id="CHEBI:18420"/>
    </ligand>
</feature>
<feature type="binding site" evidence="1">
    <location>
        <position position="96"/>
    </location>
    <ligand>
        <name>3-methyl-2-oxobutanoate</name>
        <dbReference type="ChEBI" id="CHEBI:11851"/>
    </ligand>
</feature>
<feature type="binding site" evidence="1">
    <location>
        <position position="96"/>
    </location>
    <ligand>
        <name>Mg(2+)</name>
        <dbReference type="ChEBI" id="CHEBI:18420"/>
    </ligand>
</feature>
<feature type="binding site" evidence="1">
    <location>
        <position position="126"/>
    </location>
    <ligand>
        <name>3-methyl-2-oxobutanoate</name>
        <dbReference type="ChEBI" id="CHEBI:11851"/>
    </ligand>
</feature>
<feature type="binding site" evidence="1">
    <location>
        <position position="128"/>
    </location>
    <ligand>
        <name>Mg(2+)</name>
        <dbReference type="ChEBI" id="CHEBI:18420"/>
    </ligand>
</feature>
<accession>B4S8V9</accession>
<gene>
    <name evidence="1" type="primary">panB</name>
    <name type="ordered locus">Paes_1476</name>
</gene>
<reference key="1">
    <citation type="submission" date="2008-06" db="EMBL/GenBank/DDBJ databases">
        <title>Complete sequence of chromosome of Prosthecochloris aestuarii DSM 271.</title>
        <authorList>
            <consortium name="US DOE Joint Genome Institute"/>
            <person name="Lucas S."/>
            <person name="Copeland A."/>
            <person name="Lapidus A."/>
            <person name="Glavina del Rio T."/>
            <person name="Dalin E."/>
            <person name="Tice H."/>
            <person name="Bruce D."/>
            <person name="Goodwin L."/>
            <person name="Pitluck S."/>
            <person name="Schmutz J."/>
            <person name="Larimer F."/>
            <person name="Land M."/>
            <person name="Hauser L."/>
            <person name="Kyrpides N."/>
            <person name="Anderson I."/>
            <person name="Liu Z."/>
            <person name="Li T."/>
            <person name="Zhao F."/>
            <person name="Overmann J."/>
            <person name="Bryant D.A."/>
            <person name="Richardson P."/>
        </authorList>
    </citation>
    <scope>NUCLEOTIDE SEQUENCE [LARGE SCALE GENOMIC DNA]</scope>
    <source>
        <strain>DSM 271 / SK 413</strain>
    </source>
</reference>
<name>PANB_PROA2</name>
<dbReference type="EC" id="2.1.2.11" evidence="1"/>
<dbReference type="EMBL" id="CP001108">
    <property type="protein sequence ID" value="ACF46496.1"/>
    <property type="molecule type" value="Genomic_DNA"/>
</dbReference>
<dbReference type="RefSeq" id="WP_012506029.1">
    <property type="nucleotide sequence ID" value="NC_011059.1"/>
</dbReference>
<dbReference type="SMR" id="B4S8V9"/>
<dbReference type="STRING" id="290512.Paes_1476"/>
<dbReference type="KEGG" id="paa:Paes_1476"/>
<dbReference type="eggNOG" id="COG0413">
    <property type="taxonomic scope" value="Bacteria"/>
</dbReference>
<dbReference type="HOGENOM" id="CLU_036645_1_0_10"/>
<dbReference type="UniPathway" id="UPA00028">
    <property type="reaction ID" value="UER00003"/>
</dbReference>
<dbReference type="Proteomes" id="UP000002725">
    <property type="component" value="Chromosome"/>
</dbReference>
<dbReference type="GO" id="GO:0005737">
    <property type="term" value="C:cytoplasm"/>
    <property type="evidence" value="ECO:0007669"/>
    <property type="project" value="UniProtKB-SubCell"/>
</dbReference>
<dbReference type="GO" id="GO:0003864">
    <property type="term" value="F:3-methyl-2-oxobutanoate hydroxymethyltransferase activity"/>
    <property type="evidence" value="ECO:0007669"/>
    <property type="project" value="UniProtKB-UniRule"/>
</dbReference>
<dbReference type="GO" id="GO:0000287">
    <property type="term" value="F:magnesium ion binding"/>
    <property type="evidence" value="ECO:0007669"/>
    <property type="project" value="TreeGrafter"/>
</dbReference>
<dbReference type="GO" id="GO:0015940">
    <property type="term" value="P:pantothenate biosynthetic process"/>
    <property type="evidence" value="ECO:0007669"/>
    <property type="project" value="UniProtKB-UniRule"/>
</dbReference>
<dbReference type="CDD" id="cd06557">
    <property type="entry name" value="KPHMT-like"/>
    <property type="match status" value="1"/>
</dbReference>
<dbReference type="FunFam" id="3.20.20.60:FF:000017">
    <property type="entry name" value="3-methyl-2-oxobutanoate hydroxymethyltransferase"/>
    <property type="match status" value="1"/>
</dbReference>
<dbReference type="Gene3D" id="3.20.20.60">
    <property type="entry name" value="Phosphoenolpyruvate-binding domains"/>
    <property type="match status" value="1"/>
</dbReference>
<dbReference type="HAMAP" id="MF_00156">
    <property type="entry name" value="PanB"/>
    <property type="match status" value="1"/>
</dbReference>
<dbReference type="InterPro" id="IPR003700">
    <property type="entry name" value="Pantoate_hydroxy_MeTrfase"/>
</dbReference>
<dbReference type="InterPro" id="IPR015813">
    <property type="entry name" value="Pyrv/PenolPyrv_kinase-like_dom"/>
</dbReference>
<dbReference type="InterPro" id="IPR040442">
    <property type="entry name" value="Pyrv_kinase-like_dom_sf"/>
</dbReference>
<dbReference type="NCBIfam" id="TIGR00222">
    <property type="entry name" value="panB"/>
    <property type="match status" value="1"/>
</dbReference>
<dbReference type="NCBIfam" id="NF001452">
    <property type="entry name" value="PRK00311.1"/>
    <property type="match status" value="1"/>
</dbReference>
<dbReference type="PANTHER" id="PTHR20881">
    <property type="entry name" value="3-METHYL-2-OXOBUTANOATE HYDROXYMETHYLTRANSFERASE"/>
    <property type="match status" value="1"/>
</dbReference>
<dbReference type="PANTHER" id="PTHR20881:SF0">
    <property type="entry name" value="3-METHYL-2-OXOBUTANOATE HYDROXYMETHYLTRANSFERASE"/>
    <property type="match status" value="1"/>
</dbReference>
<dbReference type="Pfam" id="PF02548">
    <property type="entry name" value="Pantoate_transf"/>
    <property type="match status" value="1"/>
</dbReference>
<dbReference type="PIRSF" id="PIRSF000388">
    <property type="entry name" value="Pantoate_hydroxy_MeTrfase"/>
    <property type="match status" value="1"/>
</dbReference>
<dbReference type="SUPFAM" id="SSF51621">
    <property type="entry name" value="Phosphoenolpyruvate/pyruvate domain"/>
    <property type="match status" value="1"/>
</dbReference>
<keyword id="KW-0963">Cytoplasm</keyword>
<keyword id="KW-0460">Magnesium</keyword>
<keyword id="KW-0479">Metal-binding</keyword>
<keyword id="KW-0566">Pantothenate biosynthesis</keyword>
<keyword id="KW-0808">Transferase</keyword>
<protein>
    <recommendedName>
        <fullName evidence="1">3-methyl-2-oxobutanoate hydroxymethyltransferase</fullName>
        <ecNumber evidence="1">2.1.2.11</ecNumber>
    </recommendedName>
    <alternativeName>
        <fullName evidence="1">Ketopantoate hydroxymethyltransferase</fullName>
        <shortName evidence="1">KPHMT</shortName>
    </alternativeName>
</protein>
<sequence>MNKQSTQKLPHVTTRRLHDMKSEGEKISMLTAYDYTTARILDRAGVDVILVGDSASNVFAGHNTTLPITIDQMIYHARAVVRGVQAETSRAMVVIDMPFMSYQLSSEEALRNAGKIMKENECDAVKIEGGNVIVDTVKRITDVGIPVMGHLGLIPQSIYKFGSYKVRAREEQEAEELLRDAKLLEEAGAFALVLEKIPADLAAEVTASISIPTIGIGAGGACDGQVLVINDMLGLSTEFHPRFVRRYAELDRVIFDAVSRYVDDVRGGTFPGEDESY</sequence>
<evidence type="ECO:0000255" key="1">
    <source>
        <dbReference type="HAMAP-Rule" id="MF_00156"/>
    </source>
</evidence>
<proteinExistence type="inferred from homology"/>